<keyword id="KW-0997">Cell inner membrane</keyword>
<keyword id="KW-1003">Cell membrane</keyword>
<keyword id="KW-0407">Ion channel</keyword>
<keyword id="KW-0406">Ion transport</keyword>
<keyword id="KW-0472">Membrane</keyword>
<keyword id="KW-0479">Metal-binding</keyword>
<keyword id="KW-0915">Sodium</keyword>
<keyword id="KW-0812">Transmembrane</keyword>
<keyword id="KW-1133">Transmembrane helix</keyword>
<keyword id="KW-0813">Transport</keyword>
<accession>Q8FZV0</accession>
<accession>G0KB55</accession>
<evidence type="ECO:0000255" key="1">
    <source>
        <dbReference type="HAMAP-Rule" id="MF_00454"/>
    </source>
</evidence>
<name>FLUC2_BRUSU</name>
<dbReference type="EMBL" id="AE014291">
    <property type="protein sequence ID" value="AAN30284.1"/>
    <property type="molecule type" value="Genomic_DNA"/>
</dbReference>
<dbReference type="EMBL" id="CP002997">
    <property type="protein sequence ID" value="AEM18701.1"/>
    <property type="molecule type" value="Genomic_DNA"/>
</dbReference>
<dbReference type="SMR" id="Q8FZV0"/>
<dbReference type="GeneID" id="45052390"/>
<dbReference type="KEGG" id="bms:BR1370"/>
<dbReference type="KEGG" id="bsi:BS1330_I1365"/>
<dbReference type="PATRIC" id="fig|204722.21.peg.846"/>
<dbReference type="HOGENOM" id="CLU_114342_3_0_5"/>
<dbReference type="Proteomes" id="UP000007104">
    <property type="component" value="Chromosome I"/>
</dbReference>
<dbReference type="GO" id="GO:0005886">
    <property type="term" value="C:plasma membrane"/>
    <property type="evidence" value="ECO:0007669"/>
    <property type="project" value="UniProtKB-SubCell"/>
</dbReference>
<dbReference type="GO" id="GO:0062054">
    <property type="term" value="F:fluoride channel activity"/>
    <property type="evidence" value="ECO:0007669"/>
    <property type="project" value="UniProtKB-UniRule"/>
</dbReference>
<dbReference type="GO" id="GO:0046872">
    <property type="term" value="F:metal ion binding"/>
    <property type="evidence" value="ECO:0007669"/>
    <property type="project" value="UniProtKB-KW"/>
</dbReference>
<dbReference type="GO" id="GO:0140114">
    <property type="term" value="P:cellular detoxification of fluoride"/>
    <property type="evidence" value="ECO:0007669"/>
    <property type="project" value="UniProtKB-UniRule"/>
</dbReference>
<dbReference type="HAMAP" id="MF_00454">
    <property type="entry name" value="FluC"/>
    <property type="match status" value="1"/>
</dbReference>
<dbReference type="InterPro" id="IPR003691">
    <property type="entry name" value="FluC"/>
</dbReference>
<dbReference type="NCBIfam" id="TIGR00494">
    <property type="entry name" value="crcB"/>
    <property type="match status" value="1"/>
</dbReference>
<dbReference type="PANTHER" id="PTHR28259">
    <property type="entry name" value="FLUORIDE EXPORT PROTEIN 1-RELATED"/>
    <property type="match status" value="1"/>
</dbReference>
<dbReference type="PANTHER" id="PTHR28259:SF18">
    <property type="entry name" value="FLUORIDE-SPECIFIC ION CHANNEL FLUC"/>
    <property type="match status" value="1"/>
</dbReference>
<dbReference type="Pfam" id="PF02537">
    <property type="entry name" value="CRCB"/>
    <property type="match status" value="1"/>
</dbReference>
<gene>
    <name evidence="1" type="primary">fluC2</name>
    <name type="synonym">ccrB</name>
    <name evidence="1" type="synonym">crcB2</name>
    <name type="ordered locus">BR1370</name>
    <name type="ordered locus">BS1330_I1365</name>
</gene>
<reference key="1">
    <citation type="journal article" date="2002" name="Proc. Natl. Acad. Sci. U.S.A.">
        <title>The Brucella suis genome reveals fundamental similarities between animal and plant pathogens and symbionts.</title>
        <authorList>
            <person name="Paulsen I.T."/>
            <person name="Seshadri R."/>
            <person name="Nelson K.E."/>
            <person name="Eisen J.A."/>
            <person name="Heidelberg J.F."/>
            <person name="Read T.D."/>
            <person name="Dodson R.J."/>
            <person name="Umayam L.A."/>
            <person name="Brinkac L.M."/>
            <person name="Beanan M.J."/>
            <person name="Daugherty S.C."/>
            <person name="DeBoy R.T."/>
            <person name="Durkin A.S."/>
            <person name="Kolonay J.F."/>
            <person name="Madupu R."/>
            <person name="Nelson W.C."/>
            <person name="Ayodeji B."/>
            <person name="Kraul M."/>
            <person name="Shetty J."/>
            <person name="Malek J.A."/>
            <person name="Van Aken S.E."/>
            <person name="Riedmuller S."/>
            <person name="Tettelin H."/>
            <person name="Gill S.R."/>
            <person name="White O."/>
            <person name="Salzberg S.L."/>
            <person name="Hoover D.L."/>
            <person name="Lindler L.E."/>
            <person name="Halling S.M."/>
            <person name="Boyle S.M."/>
            <person name="Fraser C.M."/>
        </authorList>
    </citation>
    <scope>NUCLEOTIDE SEQUENCE [LARGE SCALE GENOMIC DNA]</scope>
    <source>
        <strain>1330</strain>
    </source>
</reference>
<reference key="2">
    <citation type="journal article" date="2011" name="J. Bacteriol.">
        <title>Revised genome sequence of Brucella suis 1330.</title>
        <authorList>
            <person name="Tae H."/>
            <person name="Shallom S."/>
            <person name="Settlage R."/>
            <person name="Preston D."/>
            <person name="Adams L.G."/>
            <person name="Garner H.R."/>
        </authorList>
    </citation>
    <scope>NUCLEOTIDE SEQUENCE [LARGE SCALE GENOMIC DNA]</scope>
    <source>
        <strain>1330</strain>
    </source>
</reference>
<sequence>MTPLDVMWVGLGGGVGSLGRWWIGRIVGEYHHGAFPLGTFLINISGAFVIGYLSVLFGVDWHDRYGTMLNAGVLTGILGGYTTFSSMQLDAVKLSHKGQGGLAVFYLVASVLSGLFAAWLDAMLAHLQG</sequence>
<organism>
    <name type="scientific">Brucella suis biovar 1 (strain 1330)</name>
    <dbReference type="NCBI Taxonomy" id="204722"/>
    <lineage>
        <taxon>Bacteria</taxon>
        <taxon>Pseudomonadati</taxon>
        <taxon>Pseudomonadota</taxon>
        <taxon>Alphaproteobacteria</taxon>
        <taxon>Hyphomicrobiales</taxon>
        <taxon>Brucellaceae</taxon>
        <taxon>Brucella/Ochrobactrum group</taxon>
        <taxon>Brucella</taxon>
    </lineage>
</organism>
<feature type="chain" id="PRO_0000110076" description="Fluoride-specific ion channel FluC 2">
    <location>
        <begin position="1"/>
        <end position="129"/>
    </location>
</feature>
<feature type="transmembrane region" description="Helical" evidence="1">
    <location>
        <begin position="4"/>
        <end position="24"/>
    </location>
</feature>
<feature type="transmembrane region" description="Helical" evidence="1">
    <location>
        <begin position="39"/>
        <end position="59"/>
    </location>
</feature>
<feature type="transmembrane region" description="Helical" evidence="1">
    <location>
        <begin position="65"/>
        <end position="85"/>
    </location>
</feature>
<feature type="transmembrane region" description="Helical" evidence="1">
    <location>
        <begin position="100"/>
        <end position="120"/>
    </location>
</feature>
<feature type="binding site" evidence="1">
    <location>
        <position position="79"/>
    </location>
    <ligand>
        <name>Na(+)</name>
        <dbReference type="ChEBI" id="CHEBI:29101"/>
        <note>structural</note>
    </ligand>
</feature>
<feature type="binding site" evidence="1">
    <location>
        <position position="82"/>
    </location>
    <ligand>
        <name>Na(+)</name>
        <dbReference type="ChEBI" id="CHEBI:29101"/>
        <note>structural</note>
    </ligand>
</feature>
<proteinExistence type="inferred from homology"/>
<protein>
    <recommendedName>
        <fullName evidence="1">Fluoride-specific ion channel FluC 2</fullName>
    </recommendedName>
</protein>
<comment type="function">
    <text evidence="1">Fluoride-specific ion channel. Important for reducing fluoride concentration in the cell, thus reducing its toxicity.</text>
</comment>
<comment type="catalytic activity">
    <reaction evidence="1">
        <text>fluoride(in) = fluoride(out)</text>
        <dbReference type="Rhea" id="RHEA:76159"/>
        <dbReference type="ChEBI" id="CHEBI:17051"/>
    </reaction>
    <physiologicalReaction direction="left-to-right" evidence="1">
        <dbReference type="Rhea" id="RHEA:76160"/>
    </physiologicalReaction>
</comment>
<comment type="activity regulation">
    <text evidence="1">Na(+) is not transported, but it plays an essential structural role and its presence is essential for fluoride channel function.</text>
</comment>
<comment type="subcellular location">
    <subcellularLocation>
        <location evidence="1">Cell inner membrane</location>
        <topology evidence="1">Multi-pass membrane protein</topology>
    </subcellularLocation>
</comment>
<comment type="similarity">
    <text evidence="1">Belongs to the fluoride channel Fluc/FEX (TC 1.A.43) family.</text>
</comment>